<gene>
    <name evidence="1" type="primary">pnp</name>
    <name type="ordered locus">BMA10247_0408</name>
</gene>
<evidence type="ECO:0000255" key="1">
    <source>
        <dbReference type="HAMAP-Rule" id="MF_01595"/>
    </source>
</evidence>
<protein>
    <recommendedName>
        <fullName evidence="1">Polyribonucleotide nucleotidyltransferase</fullName>
        <ecNumber evidence="1">2.7.7.8</ecNumber>
    </recommendedName>
    <alternativeName>
        <fullName evidence="1">Polynucleotide phosphorylase</fullName>
        <shortName evidence="1">PNPase</shortName>
    </alternativeName>
</protein>
<comment type="function">
    <text evidence="1">Involved in mRNA degradation. Catalyzes the phosphorolysis of single-stranded polyribonucleotides processively in the 3'- to 5'-direction.</text>
</comment>
<comment type="catalytic activity">
    <reaction evidence="1">
        <text>RNA(n+1) + phosphate = RNA(n) + a ribonucleoside 5'-diphosphate</text>
        <dbReference type="Rhea" id="RHEA:22096"/>
        <dbReference type="Rhea" id="RHEA-COMP:14527"/>
        <dbReference type="Rhea" id="RHEA-COMP:17342"/>
        <dbReference type="ChEBI" id="CHEBI:43474"/>
        <dbReference type="ChEBI" id="CHEBI:57930"/>
        <dbReference type="ChEBI" id="CHEBI:140395"/>
        <dbReference type="EC" id="2.7.7.8"/>
    </reaction>
</comment>
<comment type="cofactor">
    <cofactor evidence="1">
        <name>Mg(2+)</name>
        <dbReference type="ChEBI" id="CHEBI:18420"/>
    </cofactor>
</comment>
<comment type="subcellular location">
    <subcellularLocation>
        <location evidence="1">Cytoplasm</location>
    </subcellularLocation>
</comment>
<comment type="similarity">
    <text evidence="1">Belongs to the polyribonucleotide nucleotidyltransferase family.</text>
</comment>
<proteinExistence type="inferred from homology"/>
<dbReference type="EC" id="2.7.7.8" evidence="1"/>
<dbReference type="EMBL" id="CP000548">
    <property type="protein sequence ID" value="ABO05379.1"/>
    <property type="molecule type" value="Genomic_DNA"/>
</dbReference>
<dbReference type="RefSeq" id="WP_004186494.1">
    <property type="nucleotide sequence ID" value="NZ_CP007802.1"/>
</dbReference>
<dbReference type="SMR" id="A3MI97"/>
<dbReference type="GeneID" id="92979547"/>
<dbReference type="KEGG" id="bmaz:BM44_2603"/>
<dbReference type="KEGG" id="bmn:BMA10247_0408"/>
<dbReference type="PATRIC" id="fig|320389.8.peg.2936"/>
<dbReference type="GO" id="GO:0005829">
    <property type="term" value="C:cytosol"/>
    <property type="evidence" value="ECO:0007669"/>
    <property type="project" value="TreeGrafter"/>
</dbReference>
<dbReference type="GO" id="GO:0000175">
    <property type="term" value="F:3'-5'-RNA exonuclease activity"/>
    <property type="evidence" value="ECO:0007669"/>
    <property type="project" value="TreeGrafter"/>
</dbReference>
<dbReference type="GO" id="GO:0000287">
    <property type="term" value="F:magnesium ion binding"/>
    <property type="evidence" value="ECO:0007669"/>
    <property type="project" value="UniProtKB-UniRule"/>
</dbReference>
<dbReference type="GO" id="GO:0004654">
    <property type="term" value="F:polyribonucleotide nucleotidyltransferase activity"/>
    <property type="evidence" value="ECO:0007669"/>
    <property type="project" value="UniProtKB-UniRule"/>
</dbReference>
<dbReference type="GO" id="GO:0003723">
    <property type="term" value="F:RNA binding"/>
    <property type="evidence" value="ECO:0007669"/>
    <property type="project" value="UniProtKB-UniRule"/>
</dbReference>
<dbReference type="GO" id="GO:0006402">
    <property type="term" value="P:mRNA catabolic process"/>
    <property type="evidence" value="ECO:0007669"/>
    <property type="project" value="UniProtKB-UniRule"/>
</dbReference>
<dbReference type="GO" id="GO:0006396">
    <property type="term" value="P:RNA processing"/>
    <property type="evidence" value="ECO:0007669"/>
    <property type="project" value="InterPro"/>
</dbReference>
<dbReference type="CDD" id="cd02393">
    <property type="entry name" value="KH-I_PNPase"/>
    <property type="match status" value="1"/>
</dbReference>
<dbReference type="CDD" id="cd11363">
    <property type="entry name" value="RNase_PH_PNPase_1"/>
    <property type="match status" value="1"/>
</dbReference>
<dbReference type="CDD" id="cd11364">
    <property type="entry name" value="RNase_PH_PNPase_2"/>
    <property type="match status" value="1"/>
</dbReference>
<dbReference type="CDD" id="cd04472">
    <property type="entry name" value="S1_PNPase"/>
    <property type="match status" value="1"/>
</dbReference>
<dbReference type="FunFam" id="3.30.1370.10:FF:000001">
    <property type="entry name" value="Polyribonucleotide nucleotidyltransferase"/>
    <property type="match status" value="1"/>
</dbReference>
<dbReference type="FunFam" id="3.30.230.70:FF:000001">
    <property type="entry name" value="Polyribonucleotide nucleotidyltransferase"/>
    <property type="match status" value="1"/>
</dbReference>
<dbReference type="FunFam" id="3.30.230.70:FF:000002">
    <property type="entry name" value="Polyribonucleotide nucleotidyltransferase"/>
    <property type="match status" value="1"/>
</dbReference>
<dbReference type="FunFam" id="2.40.50.140:FF:000189">
    <property type="entry name" value="Polyribonucleotide nucleotidyltransferase, putative"/>
    <property type="match status" value="1"/>
</dbReference>
<dbReference type="Gene3D" id="3.30.230.70">
    <property type="entry name" value="GHMP Kinase, N-terminal domain"/>
    <property type="match status" value="2"/>
</dbReference>
<dbReference type="Gene3D" id="3.30.1370.10">
    <property type="entry name" value="K Homology domain, type 1"/>
    <property type="match status" value="1"/>
</dbReference>
<dbReference type="Gene3D" id="2.40.50.140">
    <property type="entry name" value="Nucleic acid-binding proteins"/>
    <property type="match status" value="1"/>
</dbReference>
<dbReference type="HAMAP" id="MF_01595">
    <property type="entry name" value="PNPase"/>
    <property type="match status" value="1"/>
</dbReference>
<dbReference type="InterPro" id="IPR001247">
    <property type="entry name" value="ExoRNase_PH_dom1"/>
</dbReference>
<dbReference type="InterPro" id="IPR015847">
    <property type="entry name" value="ExoRNase_PH_dom2"/>
</dbReference>
<dbReference type="InterPro" id="IPR036345">
    <property type="entry name" value="ExoRNase_PH_dom2_sf"/>
</dbReference>
<dbReference type="InterPro" id="IPR004087">
    <property type="entry name" value="KH_dom"/>
</dbReference>
<dbReference type="InterPro" id="IPR004088">
    <property type="entry name" value="KH_dom_type_1"/>
</dbReference>
<dbReference type="InterPro" id="IPR036612">
    <property type="entry name" value="KH_dom_type_1_sf"/>
</dbReference>
<dbReference type="InterPro" id="IPR012340">
    <property type="entry name" value="NA-bd_OB-fold"/>
</dbReference>
<dbReference type="InterPro" id="IPR012162">
    <property type="entry name" value="PNPase"/>
</dbReference>
<dbReference type="InterPro" id="IPR027408">
    <property type="entry name" value="PNPase/RNase_PH_dom_sf"/>
</dbReference>
<dbReference type="InterPro" id="IPR015848">
    <property type="entry name" value="PNPase_PH_RNA-bd_bac/org-type"/>
</dbReference>
<dbReference type="InterPro" id="IPR036456">
    <property type="entry name" value="PNPase_PH_RNA-bd_sf"/>
</dbReference>
<dbReference type="InterPro" id="IPR020568">
    <property type="entry name" value="Ribosomal_Su5_D2-typ_SF"/>
</dbReference>
<dbReference type="InterPro" id="IPR003029">
    <property type="entry name" value="S1_domain"/>
</dbReference>
<dbReference type="NCBIfam" id="TIGR03591">
    <property type="entry name" value="polynuc_phos"/>
    <property type="match status" value="1"/>
</dbReference>
<dbReference type="NCBIfam" id="NF008805">
    <property type="entry name" value="PRK11824.1"/>
    <property type="match status" value="1"/>
</dbReference>
<dbReference type="PANTHER" id="PTHR11252">
    <property type="entry name" value="POLYRIBONUCLEOTIDE NUCLEOTIDYLTRANSFERASE"/>
    <property type="match status" value="1"/>
</dbReference>
<dbReference type="PANTHER" id="PTHR11252:SF0">
    <property type="entry name" value="POLYRIBONUCLEOTIDE NUCLEOTIDYLTRANSFERASE 1, MITOCHONDRIAL"/>
    <property type="match status" value="1"/>
</dbReference>
<dbReference type="Pfam" id="PF00013">
    <property type="entry name" value="KH_1"/>
    <property type="match status" value="1"/>
</dbReference>
<dbReference type="Pfam" id="PF03726">
    <property type="entry name" value="PNPase"/>
    <property type="match status" value="1"/>
</dbReference>
<dbReference type="Pfam" id="PF01138">
    <property type="entry name" value="RNase_PH"/>
    <property type="match status" value="2"/>
</dbReference>
<dbReference type="Pfam" id="PF03725">
    <property type="entry name" value="RNase_PH_C"/>
    <property type="match status" value="2"/>
</dbReference>
<dbReference type="Pfam" id="PF00575">
    <property type="entry name" value="S1"/>
    <property type="match status" value="1"/>
</dbReference>
<dbReference type="PIRSF" id="PIRSF005499">
    <property type="entry name" value="PNPase"/>
    <property type="match status" value="1"/>
</dbReference>
<dbReference type="SMART" id="SM00322">
    <property type="entry name" value="KH"/>
    <property type="match status" value="1"/>
</dbReference>
<dbReference type="SMART" id="SM00316">
    <property type="entry name" value="S1"/>
    <property type="match status" value="1"/>
</dbReference>
<dbReference type="SUPFAM" id="SSF54791">
    <property type="entry name" value="Eukaryotic type KH-domain (KH-domain type I)"/>
    <property type="match status" value="1"/>
</dbReference>
<dbReference type="SUPFAM" id="SSF50249">
    <property type="entry name" value="Nucleic acid-binding proteins"/>
    <property type="match status" value="1"/>
</dbReference>
<dbReference type="SUPFAM" id="SSF46915">
    <property type="entry name" value="Polynucleotide phosphorylase/guanosine pentaphosphate synthase (PNPase/GPSI), domain 3"/>
    <property type="match status" value="1"/>
</dbReference>
<dbReference type="SUPFAM" id="SSF55666">
    <property type="entry name" value="Ribonuclease PH domain 2-like"/>
    <property type="match status" value="2"/>
</dbReference>
<dbReference type="SUPFAM" id="SSF54211">
    <property type="entry name" value="Ribosomal protein S5 domain 2-like"/>
    <property type="match status" value="2"/>
</dbReference>
<dbReference type="PROSITE" id="PS50084">
    <property type="entry name" value="KH_TYPE_1"/>
    <property type="match status" value="1"/>
</dbReference>
<dbReference type="PROSITE" id="PS50126">
    <property type="entry name" value="S1"/>
    <property type="match status" value="1"/>
</dbReference>
<sequence length="713" mass="77007">MSLFNKIVKEFQWGQQKVRLETGEIARQASGAVIVDIEDTVVLATVVGAKSAKPGQDFFPLTVDYIEKTYSAGKIPGGFFRREGRPSEHETLTSRLIDRPLRPLFPEGFYNEVQVVIHVLSVNPEIPADIPALIGASAALAVSGLPFNGPVGAARVAYVNNEYVLNPTREQIKASRLDLVVAGTERAVLMVESEADQLPEDVMLGAVVFGHEQMQTAIDAIHELVREGGKPEWDWQPAPKDEALNARVTELAQPELLAAYQIRDKQARLTKLKEVYAATSAKLEEEAVAAGTVAADKATVGNILFDLEAKIVRGQILNGEPRIDGRDTRTVRPIEIRTGVLPRTHGSALFTRGETQALVVATLGTKGDEQIIDALEGEYRERFMLHYNMPPFATGETGRVGSPKRREIGHGRLAKRALVACLPSADEFGYSIRVVSEITESNGSSSMASVCGGCLALMDAGVPMKAHVAGIAMGLILEGNKFAVLTDILGDEDHLGDMDFKVAGTADGVTALQMDIKIQGITKEIMQVALAQAKEGRMHILGKMKDAVAGANTQLSEFAPRMITIKINPEKIRDVIGKGGSVIRALTEETGTTIDISDDGVVTIASTNSEGMAEAKKRIENITAEIEVGHVYEGTVLKLLDFGAIVNLLPGKDGLLHISEIVNERVKDINDYLKEGQQVKVKVIQTDEKGRVRLSAKALLNEAAAQADTPPQQ</sequence>
<name>PNP_BURM7</name>
<keyword id="KW-0963">Cytoplasm</keyword>
<keyword id="KW-0460">Magnesium</keyword>
<keyword id="KW-0479">Metal-binding</keyword>
<keyword id="KW-0548">Nucleotidyltransferase</keyword>
<keyword id="KW-0694">RNA-binding</keyword>
<keyword id="KW-0808">Transferase</keyword>
<accession>A3MI97</accession>
<organism>
    <name type="scientific">Burkholderia mallei (strain NCTC 10247)</name>
    <dbReference type="NCBI Taxonomy" id="320389"/>
    <lineage>
        <taxon>Bacteria</taxon>
        <taxon>Pseudomonadati</taxon>
        <taxon>Pseudomonadota</taxon>
        <taxon>Betaproteobacteria</taxon>
        <taxon>Burkholderiales</taxon>
        <taxon>Burkholderiaceae</taxon>
        <taxon>Burkholderia</taxon>
        <taxon>pseudomallei group</taxon>
    </lineage>
</organism>
<reference key="1">
    <citation type="journal article" date="2010" name="Genome Biol. Evol.">
        <title>Continuing evolution of Burkholderia mallei through genome reduction and large-scale rearrangements.</title>
        <authorList>
            <person name="Losada L."/>
            <person name="Ronning C.M."/>
            <person name="DeShazer D."/>
            <person name="Woods D."/>
            <person name="Fedorova N."/>
            <person name="Kim H.S."/>
            <person name="Shabalina S.A."/>
            <person name="Pearson T.R."/>
            <person name="Brinkac L."/>
            <person name="Tan P."/>
            <person name="Nandi T."/>
            <person name="Crabtree J."/>
            <person name="Badger J."/>
            <person name="Beckstrom-Sternberg S."/>
            <person name="Saqib M."/>
            <person name="Schutzer S.E."/>
            <person name="Keim P."/>
            <person name="Nierman W.C."/>
        </authorList>
    </citation>
    <scope>NUCLEOTIDE SEQUENCE [LARGE SCALE GENOMIC DNA]</scope>
    <source>
        <strain>NCTC 10247</strain>
    </source>
</reference>
<feature type="chain" id="PRO_0000329556" description="Polyribonucleotide nucleotidyltransferase">
    <location>
        <begin position="1"/>
        <end position="713"/>
    </location>
</feature>
<feature type="domain" description="KH" evidence="1">
    <location>
        <begin position="560"/>
        <end position="619"/>
    </location>
</feature>
<feature type="domain" description="S1 motif" evidence="1">
    <location>
        <begin position="629"/>
        <end position="697"/>
    </location>
</feature>
<feature type="binding site" evidence="1">
    <location>
        <position position="493"/>
    </location>
    <ligand>
        <name>Mg(2+)</name>
        <dbReference type="ChEBI" id="CHEBI:18420"/>
    </ligand>
</feature>
<feature type="binding site" evidence="1">
    <location>
        <position position="499"/>
    </location>
    <ligand>
        <name>Mg(2+)</name>
        <dbReference type="ChEBI" id="CHEBI:18420"/>
    </ligand>
</feature>